<name>LDOC1_MOUSE</name>
<dbReference type="EMBL" id="AL672025">
    <property type="status" value="NOT_ANNOTATED_CDS"/>
    <property type="molecule type" value="Genomic_DNA"/>
</dbReference>
<dbReference type="EMBL" id="BC052689">
    <property type="protein sequence ID" value="AAH52689.1"/>
    <property type="molecule type" value="mRNA"/>
</dbReference>
<dbReference type="EMBL" id="AK137057">
    <property type="protein sequence ID" value="BAE23221.1"/>
    <property type="molecule type" value="mRNA"/>
</dbReference>
<dbReference type="CCDS" id="CCDS30163.1"/>
<dbReference type="RefSeq" id="NP_001018097.1">
    <property type="nucleotide sequence ID" value="NM_001018087.2"/>
</dbReference>
<dbReference type="SMR" id="Q7TPY9"/>
<dbReference type="FunCoup" id="Q7TPY9">
    <property type="interactions" value="363"/>
</dbReference>
<dbReference type="STRING" id="10090.ENSMUSP00000075366"/>
<dbReference type="PaxDb" id="10090-ENSMUSP00000075366"/>
<dbReference type="Antibodypedia" id="16816">
    <property type="antibodies" value="207 antibodies from 27 providers"/>
</dbReference>
<dbReference type="DNASU" id="434784"/>
<dbReference type="Ensembl" id="ENSMUST00000075983.6">
    <property type="protein sequence ID" value="ENSMUSP00000075366.5"/>
    <property type="gene ID" value="ENSMUSG00000057615.6"/>
</dbReference>
<dbReference type="GeneID" id="434784"/>
<dbReference type="KEGG" id="mmu:434784"/>
<dbReference type="UCSC" id="uc009tij.1">
    <property type="organism name" value="mouse"/>
</dbReference>
<dbReference type="AGR" id="MGI:2685212"/>
<dbReference type="CTD" id="23641"/>
<dbReference type="MGI" id="MGI:2685212">
    <property type="gene designation" value="Ldoc1"/>
</dbReference>
<dbReference type="VEuPathDB" id="HostDB:ENSMUSG00000057615"/>
<dbReference type="eggNOG" id="ENOG502T19P">
    <property type="taxonomic scope" value="Eukaryota"/>
</dbReference>
<dbReference type="GeneTree" id="ENSGT00940000162721"/>
<dbReference type="HOGENOM" id="CLU_154949_0_0_1"/>
<dbReference type="InParanoid" id="Q7TPY9"/>
<dbReference type="OMA" id="CERACLL"/>
<dbReference type="OrthoDB" id="9827795at2759"/>
<dbReference type="PhylomeDB" id="Q7TPY9"/>
<dbReference type="TreeFam" id="TF337843"/>
<dbReference type="BioGRID-ORCS" id="434784">
    <property type="hits" value="2 hits in 60 CRISPR screens"/>
</dbReference>
<dbReference type="PRO" id="PR:Q7TPY9"/>
<dbReference type="Proteomes" id="UP000000589">
    <property type="component" value="Chromosome X"/>
</dbReference>
<dbReference type="RNAct" id="Q7TPY9">
    <property type="molecule type" value="protein"/>
</dbReference>
<dbReference type="Bgee" id="ENSMUSG00000057615">
    <property type="expression patterns" value="Expressed in ectoplacental cone and 47 other cell types or tissues"/>
</dbReference>
<dbReference type="GO" id="GO:0005730">
    <property type="term" value="C:nucleolus"/>
    <property type="evidence" value="ECO:0007669"/>
    <property type="project" value="Ensembl"/>
</dbReference>
<dbReference type="GO" id="GO:0005654">
    <property type="term" value="C:nucleoplasm"/>
    <property type="evidence" value="ECO:0007669"/>
    <property type="project" value="Ensembl"/>
</dbReference>
<dbReference type="GO" id="GO:0071222">
    <property type="term" value="P:cellular response to lipopolysaccharide"/>
    <property type="evidence" value="ECO:0000250"/>
    <property type="project" value="UniProtKB"/>
</dbReference>
<dbReference type="GO" id="GO:0071225">
    <property type="term" value="P:cellular response to muramyl dipeptide"/>
    <property type="evidence" value="ECO:0000250"/>
    <property type="project" value="UniProtKB"/>
</dbReference>
<dbReference type="GO" id="GO:0001893">
    <property type="term" value="P:maternal placenta development"/>
    <property type="evidence" value="ECO:0000315"/>
    <property type="project" value="MGI"/>
</dbReference>
<dbReference type="GO" id="GO:0060137">
    <property type="term" value="P:maternal process involved in parturition"/>
    <property type="evidence" value="ECO:0000315"/>
    <property type="project" value="MGI"/>
</dbReference>
<dbReference type="InterPro" id="IPR032549">
    <property type="entry name" value="DUF4939"/>
</dbReference>
<dbReference type="Pfam" id="PF16297">
    <property type="entry name" value="DUF4939"/>
    <property type="match status" value="1"/>
</dbReference>
<accession>Q7TPY9</accession>
<accession>B1AV12</accession>
<evidence type="ECO:0000250" key="1"/>
<evidence type="ECO:0000250" key="2">
    <source>
        <dbReference type="UniProtKB" id="O95751"/>
    </source>
</evidence>
<evidence type="ECO:0000256" key="3">
    <source>
        <dbReference type="SAM" id="MobiDB-lite"/>
    </source>
</evidence>
<evidence type="ECO:0000305" key="4"/>
<comment type="function">
    <text evidence="1">May have an important role in the development and/or progression of some cancers.</text>
</comment>
<comment type="subunit">
    <text evidence="2">Interacts with NOD2.</text>
</comment>
<comment type="subcellular location">
    <subcellularLocation>
        <location evidence="1">Nucleus</location>
    </subcellularLocation>
</comment>
<comment type="similarity">
    <text evidence="4">Belongs to the LDOC1 family.</text>
</comment>
<organism>
    <name type="scientific">Mus musculus</name>
    <name type="common">Mouse</name>
    <dbReference type="NCBI Taxonomy" id="10090"/>
    <lineage>
        <taxon>Eukaryota</taxon>
        <taxon>Metazoa</taxon>
        <taxon>Chordata</taxon>
        <taxon>Craniata</taxon>
        <taxon>Vertebrata</taxon>
        <taxon>Euteleostomi</taxon>
        <taxon>Mammalia</taxon>
        <taxon>Eutheria</taxon>
        <taxon>Euarchontoglires</taxon>
        <taxon>Glires</taxon>
        <taxon>Rodentia</taxon>
        <taxon>Myomorpha</taxon>
        <taxon>Muroidea</taxon>
        <taxon>Muridae</taxon>
        <taxon>Murinae</taxon>
        <taxon>Mus</taxon>
        <taxon>Mus</taxon>
    </lineage>
</organism>
<feature type="chain" id="PRO_0000084392" description="Protein LDOC1">
    <location>
        <begin position="1"/>
        <end position="151"/>
    </location>
</feature>
<feature type="region of interest" description="Disordered" evidence="3">
    <location>
        <begin position="132"/>
        <end position="151"/>
    </location>
</feature>
<feature type="compositionally biased region" description="Acidic residues" evidence="3">
    <location>
        <begin position="133"/>
        <end position="151"/>
    </location>
</feature>
<keyword id="KW-0539">Nucleus</keyword>
<keyword id="KW-1185">Reference proteome</keyword>
<reference key="1">
    <citation type="journal article" date="2009" name="PLoS Biol.">
        <title>Lineage-specific biology revealed by a finished genome assembly of the mouse.</title>
        <authorList>
            <person name="Church D.M."/>
            <person name="Goodstadt L."/>
            <person name="Hillier L.W."/>
            <person name="Zody M.C."/>
            <person name="Goldstein S."/>
            <person name="She X."/>
            <person name="Bult C.J."/>
            <person name="Agarwala R."/>
            <person name="Cherry J.L."/>
            <person name="DiCuccio M."/>
            <person name="Hlavina W."/>
            <person name="Kapustin Y."/>
            <person name="Meric P."/>
            <person name="Maglott D."/>
            <person name="Birtle Z."/>
            <person name="Marques A.C."/>
            <person name="Graves T."/>
            <person name="Zhou S."/>
            <person name="Teague B."/>
            <person name="Potamousis K."/>
            <person name="Churas C."/>
            <person name="Place M."/>
            <person name="Herschleb J."/>
            <person name="Runnheim R."/>
            <person name="Forrest D."/>
            <person name="Amos-Landgraf J."/>
            <person name="Schwartz D.C."/>
            <person name="Cheng Z."/>
            <person name="Lindblad-Toh K."/>
            <person name="Eichler E.E."/>
            <person name="Ponting C.P."/>
        </authorList>
    </citation>
    <scope>NUCLEOTIDE SEQUENCE [LARGE SCALE GENOMIC DNA]</scope>
    <source>
        <strain>C57BL/6J</strain>
    </source>
</reference>
<reference key="2">
    <citation type="journal article" date="2004" name="Genome Res.">
        <title>The status, quality, and expansion of the NIH full-length cDNA project: the Mammalian Gene Collection (MGC).</title>
        <authorList>
            <consortium name="The MGC Project Team"/>
        </authorList>
    </citation>
    <scope>NUCLEOTIDE SEQUENCE [LARGE SCALE MRNA]</scope>
    <source>
        <strain>C57BL/6J</strain>
        <tissue>Egg</tissue>
    </source>
</reference>
<reference key="3">
    <citation type="journal article" date="2005" name="Science">
        <title>The transcriptional landscape of the mammalian genome.</title>
        <authorList>
            <person name="Carninci P."/>
            <person name="Kasukawa T."/>
            <person name="Katayama S."/>
            <person name="Gough J."/>
            <person name="Frith M.C."/>
            <person name="Maeda N."/>
            <person name="Oyama R."/>
            <person name="Ravasi T."/>
            <person name="Lenhard B."/>
            <person name="Wells C."/>
            <person name="Kodzius R."/>
            <person name="Shimokawa K."/>
            <person name="Bajic V.B."/>
            <person name="Brenner S.E."/>
            <person name="Batalov S."/>
            <person name="Forrest A.R."/>
            <person name="Zavolan M."/>
            <person name="Davis M.J."/>
            <person name="Wilming L.G."/>
            <person name="Aidinis V."/>
            <person name="Allen J.E."/>
            <person name="Ambesi-Impiombato A."/>
            <person name="Apweiler R."/>
            <person name="Aturaliya R.N."/>
            <person name="Bailey T.L."/>
            <person name="Bansal M."/>
            <person name="Baxter L."/>
            <person name="Beisel K.W."/>
            <person name="Bersano T."/>
            <person name="Bono H."/>
            <person name="Chalk A.M."/>
            <person name="Chiu K.P."/>
            <person name="Choudhary V."/>
            <person name="Christoffels A."/>
            <person name="Clutterbuck D.R."/>
            <person name="Crowe M.L."/>
            <person name="Dalla E."/>
            <person name="Dalrymple B.P."/>
            <person name="de Bono B."/>
            <person name="Della Gatta G."/>
            <person name="di Bernardo D."/>
            <person name="Down T."/>
            <person name="Engstrom P."/>
            <person name="Fagiolini M."/>
            <person name="Faulkner G."/>
            <person name="Fletcher C.F."/>
            <person name="Fukushima T."/>
            <person name="Furuno M."/>
            <person name="Futaki S."/>
            <person name="Gariboldi M."/>
            <person name="Georgii-Hemming P."/>
            <person name="Gingeras T.R."/>
            <person name="Gojobori T."/>
            <person name="Green R.E."/>
            <person name="Gustincich S."/>
            <person name="Harbers M."/>
            <person name="Hayashi Y."/>
            <person name="Hensch T.K."/>
            <person name="Hirokawa N."/>
            <person name="Hill D."/>
            <person name="Huminiecki L."/>
            <person name="Iacono M."/>
            <person name="Ikeo K."/>
            <person name="Iwama A."/>
            <person name="Ishikawa T."/>
            <person name="Jakt M."/>
            <person name="Kanapin A."/>
            <person name="Katoh M."/>
            <person name="Kawasawa Y."/>
            <person name="Kelso J."/>
            <person name="Kitamura H."/>
            <person name="Kitano H."/>
            <person name="Kollias G."/>
            <person name="Krishnan S.P."/>
            <person name="Kruger A."/>
            <person name="Kummerfeld S.K."/>
            <person name="Kurochkin I.V."/>
            <person name="Lareau L.F."/>
            <person name="Lazarevic D."/>
            <person name="Lipovich L."/>
            <person name="Liu J."/>
            <person name="Liuni S."/>
            <person name="McWilliam S."/>
            <person name="Madan Babu M."/>
            <person name="Madera M."/>
            <person name="Marchionni L."/>
            <person name="Matsuda H."/>
            <person name="Matsuzawa S."/>
            <person name="Miki H."/>
            <person name="Mignone F."/>
            <person name="Miyake S."/>
            <person name="Morris K."/>
            <person name="Mottagui-Tabar S."/>
            <person name="Mulder N."/>
            <person name="Nakano N."/>
            <person name="Nakauchi H."/>
            <person name="Ng P."/>
            <person name="Nilsson R."/>
            <person name="Nishiguchi S."/>
            <person name="Nishikawa S."/>
            <person name="Nori F."/>
            <person name="Ohara O."/>
            <person name="Okazaki Y."/>
            <person name="Orlando V."/>
            <person name="Pang K.C."/>
            <person name="Pavan W.J."/>
            <person name="Pavesi G."/>
            <person name="Pesole G."/>
            <person name="Petrovsky N."/>
            <person name="Piazza S."/>
            <person name="Reed J."/>
            <person name="Reid J.F."/>
            <person name="Ring B.Z."/>
            <person name="Ringwald M."/>
            <person name="Rost B."/>
            <person name="Ruan Y."/>
            <person name="Salzberg S.L."/>
            <person name="Sandelin A."/>
            <person name="Schneider C."/>
            <person name="Schoenbach C."/>
            <person name="Sekiguchi K."/>
            <person name="Semple C.A."/>
            <person name="Seno S."/>
            <person name="Sessa L."/>
            <person name="Sheng Y."/>
            <person name="Shibata Y."/>
            <person name="Shimada H."/>
            <person name="Shimada K."/>
            <person name="Silva D."/>
            <person name="Sinclair B."/>
            <person name="Sperling S."/>
            <person name="Stupka E."/>
            <person name="Sugiura K."/>
            <person name="Sultana R."/>
            <person name="Takenaka Y."/>
            <person name="Taki K."/>
            <person name="Tammoja K."/>
            <person name="Tan S.L."/>
            <person name="Tang S."/>
            <person name="Taylor M.S."/>
            <person name="Tegner J."/>
            <person name="Teichmann S.A."/>
            <person name="Ueda H.R."/>
            <person name="van Nimwegen E."/>
            <person name="Verardo R."/>
            <person name="Wei C.L."/>
            <person name="Yagi K."/>
            <person name="Yamanishi H."/>
            <person name="Zabarovsky E."/>
            <person name="Zhu S."/>
            <person name="Zimmer A."/>
            <person name="Hide W."/>
            <person name="Bult C."/>
            <person name="Grimmond S.M."/>
            <person name="Teasdale R.D."/>
            <person name="Liu E.T."/>
            <person name="Brusic V."/>
            <person name="Quackenbush J."/>
            <person name="Wahlestedt C."/>
            <person name="Mattick J.S."/>
            <person name="Hume D.A."/>
            <person name="Kai C."/>
            <person name="Sasaki D."/>
            <person name="Tomaru Y."/>
            <person name="Fukuda S."/>
            <person name="Kanamori-Katayama M."/>
            <person name="Suzuki M."/>
            <person name="Aoki J."/>
            <person name="Arakawa T."/>
            <person name="Iida J."/>
            <person name="Imamura K."/>
            <person name="Itoh M."/>
            <person name="Kato T."/>
            <person name="Kawaji H."/>
            <person name="Kawagashira N."/>
            <person name="Kawashima T."/>
            <person name="Kojima M."/>
            <person name="Kondo S."/>
            <person name="Konno H."/>
            <person name="Nakano K."/>
            <person name="Ninomiya N."/>
            <person name="Nishio T."/>
            <person name="Okada M."/>
            <person name="Plessy C."/>
            <person name="Shibata K."/>
            <person name="Shiraki T."/>
            <person name="Suzuki S."/>
            <person name="Tagami M."/>
            <person name="Waki K."/>
            <person name="Watahiki A."/>
            <person name="Okamura-Oho Y."/>
            <person name="Suzuki H."/>
            <person name="Kawai J."/>
            <person name="Hayashizaki Y."/>
        </authorList>
    </citation>
    <scope>NUCLEOTIDE SEQUENCE [LARGE SCALE MRNA]</scope>
    <source>
        <strain>C57BL/6J</strain>
        <tissue>Embryo</tissue>
    </source>
</reference>
<sequence>MVEELLSLLHALLDRHQALCMENHQLLKQLRLLVCERARLLRQVCPPSCPVPYPSRFSGESGRLPEFIMQTMSYMLANEEHFCNDAMKVAFLISLLSGEAEEWVMPYIESNSYVLGDYQAFVDEMKQYFGWGTDDEDDGDDDEEEEMEEDH</sequence>
<gene>
    <name type="primary">Ldoc1</name>
    <name type="synonym">Gm366</name>
</gene>
<proteinExistence type="evidence at transcript level"/>
<protein>
    <recommendedName>
        <fullName>Protein LDOC1</fullName>
    </recommendedName>
</protein>